<proteinExistence type="inferred from homology"/>
<reference key="1">
    <citation type="journal article" date="2006" name="Proc. Natl. Acad. Sci. U.S.A.">
        <title>Comparative genomics of the lactic acid bacteria.</title>
        <authorList>
            <person name="Makarova K.S."/>
            <person name="Slesarev A."/>
            <person name="Wolf Y.I."/>
            <person name="Sorokin A."/>
            <person name="Mirkin B."/>
            <person name="Koonin E.V."/>
            <person name="Pavlov A."/>
            <person name="Pavlova N."/>
            <person name="Karamychev V."/>
            <person name="Polouchine N."/>
            <person name="Shakhova V."/>
            <person name="Grigoriev I."/>
            <person name="Lou Y."/>
            <person name="Rohksar D."/>
            <person name="Lucas S."/>
            <person name="Huang K."/>
            <person name="Goodstein D.M."/>
            <person name="Hawkins T."/>
            <person name="Plengvidhya V."/>
            <person name="Welker D."/>
            <person name="Hughes J."/>
            <person name="Goh Y."/>
            <person name="Benson A."/>
            <person name="Baldwin K."/>
            <person name="Lee J.-H."/>
            <person name="Diaz-Muniz I."/>
            <person name="Dosti B."/>
            <person name="Smeianov V."/>
            <person name="Wechter W."/>
            <person name="Barabote R."/>
            <person name="Lorca G."/>
            <person name="Altermann E."/>
            <person name="Barrangou R."/>
            <person name="Ganesan B."/>
            <person name="Xie Y."/>
            <person name="Rawsthorne H."/>
            <person name="Tamir D."/>
            <person name="Parker C."/>
            <person name="Breidt F."/>
            <person name="Broadbent J.R."/>
            <person name="Hutkins R."/>
            <person name="O'Sullivan D."/>
            <person name="Steele J."/>
            <person name="Unlu G."/>
            <person name="Saier M.H. Jr."/>
            <person name="Klaenhammer T."/>
            <person name="Richardson P."/>
            <person name="Kozyavkin S."/>
            <person name="Weimer B.C."/>
            <person name="Mills D.A."/>
        </authorList>
    </citation>
    <scope>NUCLEOTIDE SEQUENCE [LARGE SCALE GENOMIC DNA]</scope>
    <source>
        <strain>ATCC 25745 / CCUG 21536 / LMG 10740 / 183-1w</strain>
    </source>
</reference>
<comment type="function">
    <text evidence="1">Involved in transcription antitermination. Required for transcription of ribosomal RNA (rRNA) genes. Binds specifically to the boxA antiterminator sequence of the ribosomal RNA (rrn) operons.</text>
</comment>
<comment type="similarity">
    <text evidence="1">Belongs to the NusB family.</text>
</comment>
<keyword id="KW-0694">RNA-binding</keyword>
<keyword id="KW-0804">Transcription</keyword>
<keyword id="KW-0889">Transcription antitermination</keyword>
<keyword id="KW-0805">Transcription regulation</keyword>
<organism>
    <name type="scientific">Pediococcus pentosaceus (strain ATCC 25745 / CCUG 21536 / LMG 10740 / 183-1w)</name>
    <dbReference type="NCBI Taxonomy" id="278197"/>
    <lineage>
        <taxon>Bacteria</taxon>
        <taxon>Bacillati</taxon>
        <taxon>Bacillota</taxon>
        <taxon>Bacilli</taxon>
        <taxon>Lactobacillales</taxon>
        <taxon>Lactobacillaceae</taxon>
        <taxon>Pediococcus</taxon>
    </lineage>
</organism>
<gene>
    <name evidence="1" type="primary">nusB</name>
    <name type="ordered locus">PEPE_0816</name>
</gene>
<evidence type="ECO:0000255" key="1">
    <source>
        <dbReference type="HAMAP-Rule" id="MF_00073"/>
    </source>
</evidence>
<accession>Q03FZ6</accession>
<name>NUSB_PEDPA</name>
<dbReference type="EMBL" id="CP000422">
    <property type="protein sequence ID" value="ABJ67876.1"/>
    <property type="molecule type" value="Genomic_DNA"/>
</dbReference>
<dbReference type="RefSeq" id="WP_002833544.1">
    <property type="nucleotide sequence ID" value="NC_008525.1"/>
</dbReference>
<dbReference type="SMR" id="Q03FZ6"/>
<dbReference type="STRING" id="278197.PEPE_0816"/>
<dbReference type="GeneID" id="33061509"/>
<dbReference type="KEGG" id="ppe:PEPE_0816"/>
<dbReference type="eggNOG" id="COG0781">
    <property type="taxonomic scope" value="Bacteria"/>
</dbReference>
<dbReference type="HOGENOM" id="CLU_087843_3_2_9"/>
<dbReference type="OrthoDB" id="9811381at2"/>
<dbReference type="Proteomes" id="UP000000773">
    <property type="component" value="Chromosome"/>
</dbReference>
<dbReference type="GO" id="GO:0005829">
    <property type="term" value="C:cytosol"/>
    <property type="evidence" value="ECO:0007669"/>
    <property type="project" value="TreeGrafter"/>
</dbReference>
<dbReference type="GO" id="GO:0003723">
    <property type="term" value="F:RNA binding"/>
    <property type="evidence" value="ECO:0007669"/>
    <property type="project" value="UniProtKB-UniRule"/>
</dbReference>
<dbReference type="GO" id="GO:0006353">
    <property type="term" value="P:DNA-templated transcription termination"/>
    <property type="evidence" value="ECO:0007669"/>
    <property type="project" value="UniProtKB-UniRule"/>
</dbReference>
<dbReference type="GO" id="GO:0031564">
    <property type="term" value="P:transcription antitermination"/>
    <property type="evidence" value="ECO:0007669"/>
    <property type="project" value="UniProtKB-KW"/>
</dbReference>
<dbReference type="Gene3D" id="1.10.940.10">
    <property type="entry name" value="NusB-like"/>
    <property type="match status" value="1"/>
</dbReference>
<dbReference type="HAMAP" id="MF_00073">
    <property type="entry name" value="NusB"/>
    <property type="match status" value="1"/>
</dbReference>
<dbReference type="InterPro" id="IPR035926">
    <property type="entry name" value="NusB-like_sf"/>
</dbReference>
<dbReference type="InterPro" id="IPR011605">
    <property type="entry name" value="NusB_fam"/>
</dbReference>
<dbReference type="InterPro" id="IPR006027">
    <property type="entry name" value="NusB_RsmB_TIM44"/>
</dbReference>
<dbReference type="NCBIfam" id="TIGR01951">
    <property type="entry name" value="nusB"/>
    <property type="match status" value="1"/>
</dbReference>
<dbReference type="NCBIfam" id="NF001223">
    <property type="entry name" value="PRK00202.1-1"/>
    <property type="match status" value="1"/>
</dbReference>
<dbReference type="PANTHER" id="PTHR11078:SF3">
    <property type="entry name" value="ANTITERMINATION NUSB DOMAIN-CONTAINING PROTEIN"/>
    <property type="match status" value="1"/>
</dbReference>
<dbReference type="PANTHER" id="PTHR11078">
    <property type="entry name" value="N UTILIZATION SUBSTANCE PROTEIN B-RELATED"/>
    <property type="match status" value="1"/>
</dbReference>
<dbReference type="Pfam" id="PF01029">
    <property type="entry name" value="NusB"/>
    <property type="match status" value="1"/>
</dbReference>
<dbReference type="SUPFAM" id="SSF48013">
    <property type="entry name" value="NusB-like"/>
    <property type="match status" value="1"/>
</dbReference>
<feature type="chain" id="PRO_1000023759" description="Transcription antitermination protein NusB">
    <location>
        <begin position="1"/>
        <end position="133"/>
    </location>
</feature>
<protein>
    <recommendedName>
        <fullName evidence="1">Transcription antitermination protein NusB</fullName>
    </recommendedName>
    <alternativeName>
        <fullName evidence="1">Antitermination factor NusB</fullName>
    </alternativeName>
</protein>
<sequence length="133" mass="15098">MSLNRHQIRESAFKIIFAKSANPDADLSELQDQVLEEFHETEAPDQFLKDLVMGVSLNLEAINETISGELKKGWTVKRLESPDRVILQMGTYEIKYTETPDKVAINEALELAKKYTDEDARKFINGVLSNIAK</sequence>